<protein>
    <recommendedName>
        <fullName evidence="1">UPF0283 membrane protein YcjF</fullName>
    </recommendedName>
</protein>
<evidence type="ECO:0000255" key="1">
    <source>
        <dbReference type="HAMAP-Rule" id="MF_01085"/>
    </source>
</evidence>
<evidence type="ECO:0000256" key="2">
    <source>
        <dbReference type="SAM" id="MobiDB-lite"/>
    </source>
</evidence>
<feature type="chain" id="PRO_1000136894" description="UPF0283 membrane protein YcjF">
    <location>
        <begin position="1"/>
        <end position="353"/>
    </location>
</feature>
<feature type="transmembrane region" description="Helical" evidence="1">
    <location>
        <begin position="70"/>
        <end position="90"/>
    </location>
</feature>
<feature type="transmembrane region" description="Helical" evidence="1">
    <location>
        <begin position="100"/>
        <end position="120"/>
    </location>
</feature>
<feature type="transmembrane region" description="Helical" evidence="1">
    <location>
        <begin position="213"/>
        <end position="233"/>
    </location>
</feature>
<feature type="region of interest" description="Disordered" evidence="2">
    <location>
        <begin position="1"/>
        <end position="35"/>
    </location>
</feature>
<feature type="compositionally biased region" description="Basic and acidic residues" evidence="2">
    <location>
        <begin position="1"/>
        <end position="19"/>
    </location>
</feature>
<proteinExistence type="inferred from homology"/>
<gene>
    <name evidence="1" type="primary">ycjF</name>
    <name type="ordered locus">SeD_A1648</name>
</gene>
<reference key="1">
    <citation type="journal article" date="2011" name="J. Bacteriol.">
        <title>Comparative genomics of 28 Salmonella enterica isolates: evidence for CRISPR-mediated adaptive sublineage evolution.</title>
        <authorList>
            <person name="Fricke W.F."/>
            <person name="Mammel M.K."/>
            <person name="McDermott P.F."/>
            <person name="Tartera C."/>
            <person name="White D.G."/>
            <person name="Leclerc J.E."/>
            <person name="Ravel J."/>
            <person name="Cebula T.A."/>
        </authorList>
    </citation>
    <scope>NUCLEOTIDE SEQUENCE [LARGE SCALE GENOMIC DNA]</scope>
    <source>
        <strain>CT_02021853</strain>
    </source>
</reference>
<keyword id="KW-0997">Cell inner membrane</keyword>
<keyword id="KW-1003">Cell membrane</keyword>
<keyword id="KW-0472">Membrane</keyword>
<keyword id="KW-0812">Transmembrane</keyword>
<keyword id="KW-1133">Transmembrane helix</keyword>
<name>YCJF_SALDC</name>
<comment type="subcellular location">
    <subcellularLocation>
        <location evidence="1">Cell inner membrane</location>
        <topology evidence="1">Multi-pass membrane protein</topology>
    </subcellularLocation>
</comment>
<comment type="similarity">
    <text evidence="1">Belongs to the UPF0283 family.</text>
</comment>
<accession>B5FUK9</accession>
<sequence>MSEPLKPRIDFAEPLKEEPTSAFKAQQTFSEAESRTFAPAAIDERPEDEGVAEAAVDAALRPKRSLWRKMVMGGLALFGASVVGQGVQWTMNAWQTQDWVALGGCAAGALIIGAGVGSVVTEWRRLWRLRQRAHERDEARELLHSHSVGKGRAFCEKLAQQAGIDQSHPALQRWYAAIHETQNDREIVGLYAHLVQPVLDAQARREISRFAAESTLMIAVSPLALVDMAFIAWRNLRLINRITTLYGIELGYYSRLRLFRLVLLNIAFAGASELVREVGMDWMSQDLAARLSTRAAQGIGAGLLTARLGIKAMELCRPLPWIDNDKPRLGDFRRQLIGQLKETLQKSKSSPEK</sequence>
<organism>
    <name type="scientific">Salmonella dublin (strain CT_02021853)</name>
    <dbReference type="NCBI Taxonomy" id="439851"/>
    <lineage>
        <taxon>Bacteria</taxon>
        <taxon>Pseudomonadati</taxon>
        <taxon>Pseudomonadota</taxon>
        <taxon>Gammaproteobacteria</taxon>
        <taxon>Enterobacterales</taxon>
        <taxon>Enterobacteriaceae</taxon>
        <taxon>Salmonella</taxon>
    </lineage>
</organism>
<dbReference type="EMBL" id="CP001144">
    <property type="protein sequence ID" value="ACH74131.1"/>
    <property type="molecule type" value="Genomic_DNA"/>
</dbReference>
<dbReference type="RefSeq" id="WP_001294464.1">
    <property type="nucleotide sequence ID" value="NC_011205.1"/>
</dbReference>
<dbReference type="SMR" id="B5FUK9"/>
<dbReference type="KEGG" id="sed:SeD_A1648"/>
<dbReference type="HOGENOM" id="CLU_057693_2_0_6"/>
<dbReference type="Proteomes" id="UP000008322">
    <property type="component" value="Chromosome"/>
</dbReference>
<dbReference type="GO" id="GO:0005886">
    <property type="term" value="C:plasma membrane"/>
    <property type="evidence" value="ECO:0007669"/>
    <property type="project" value="UniProtKB-SubCell"/>
</dbReference>
<dbReference type="HAMAP" id="MF_01085">
    <property type="entry name" value="UPF0283"/>
    <property type="match status" value="1"/>
</dbReference>
<dbReference type="InterPro" id="IPR021147">
    <property type="entry name" value="DUF697"/>
</dbReference>
<dbReference type="InterPro" id="IPR006507">
    <property type="entry name" value="UPF0283"/>
</dbReference>
<dbReference type="NCBIfam" id="TIGR01620">
    <property type="entry name" value="hyp_HI0043"/>
    <property type="match status" value="1"/>
</dbReference>
<dbReference type="PANTHER" id="PTHR39342">
    <property type="entry name" value="UPF0283 MEMBRANE PROTEIN YCJF"/>
    <property type="match status" value="1"/>
</dbReference>
<dbReference type="PANTHER" id="PTHR39342:SF1">
    <property type="entry name" value="UPF0283 MEMBRANE PROTEIN YCJF"/>
    <property type="match status" value="1"/>
</dbReference>
<dbReference type="Pfam" id="PF05128">
    <property type="entry name" value="DUF697"/>
    <property type="match status" value="1"/>
</dbReference>